<protein>
    <recommendedName>
        <fullName>CASP-like protein UU1</fullName>
        <shortName>OsCASPLUU1</shortName>
    </recommendedName>
</protein>
<reference key="1">
    <citation type="journal article" date="2005" name="PLoS Biol.">
        <title>The genomes of Oryza sativa: a history of duplications.</title>
        <authorList>
            <person name="Yu J."/>
            <person name="Wang J."/>
            <person name="Lin W."/>
            <person name="Li S."/>
            <person name="Li H."/>
            <person name="Zhou J."/>
            <person name="Ni P."/>
            <person name="Dong W."/>
            <person name="Hu S."/>
            <person name="Zeng C."/>
            <person name="Zhang J."/>
            <person name="Zhang Y."/>
            <person name="Li R."/>
            <person name="Xu Z."/>
            <person name="Li S."/>
            <person name="Li X."/>
            <person name="Zheng H."/>
            <person name="Cong L."/>
            <person name="Lin L."/>
            <person name="Yin J."/>
            <person name="Geng J."/>
            <person name="Li G."/>
            <person name="Shi J."/>
            <person name="Liu J."/>
            <person name="Lv H."/>
            <person name="Li J."/>
            <person name="Wang J."/>
            <person name="Deng Y."/>
            <person name="Ran L."/>
            <person name="Shi X."/>
            <person name="Wang X."/>
            <person name="Wu Q."/>
            <person name="Li C."/>
            <person name="Ren X."/>
            <person name="Wang J."/>
            <person name="Wang X."/>
            <person name="Li D."/>
            <person name="Liu D."/>
            <person name="Zhang X."/>
            <person name="Ji Z."/>
            <person name="Zhao W."/>
            <person name="Sun Y."/>
            <person name="Zhang Z."/>
            <person name="Bao J."/>
            <person name="Han Y."/>
            <person name="Dong L."/>
            <person name="Ji J."/>
            <person name="Chen P."/>
            <person name="Wu S."/>
            <person name="Liu J."/>
            <person name="Xiao Y."/>
            <person name="Bu D."/>
            <person name="Tan J."/>
            <person name="Yang L."/>
            <person name="Ye C."/>
            <person name="Zhang J."/>
            <person name="Xu J."/>
            <person name="Zhou Y."/>
            <person name="Yu Y."/>
            <person name="Zhang B."/>
            <person name="Zhuang S."/>
            <person name="Wei H."/>
            <person name="Liu B."/>
            <person name="Lei M."/>
            <person name="Yu H."/>
            <person name="Li Y."/>
            <person name="Xu H."/>
            <person name="Wei S."/>
            <person name="He X."/>
            <person name="Fang L."/>
            <person name="Zhang Z."/>
            <person name="Zhang Y."/>
            <person name="Huang X."/>
            <person name="Su Z."/>
            <person name="Tong W."/>
            <person name="Li J."/>
            <person name="Tong Z."/>
            <person name="Li S."/>
            <person name="Ye J."/>
            <person name="Wang L."/>
            <person name="Fang L."/>
            <person name="Lei T."/>
            <person name="Chen C.-S."/>
            <person name="Chen H.-C."/>
            <person name="Xu Z."/>
            <person name="Li H."/>
            <person name="Huang H."/>
            <person name="Zhang F."/>
            <person name="Xu H."/>
            <person name="Li N."/>
            <person name="Zhao C."/>
            <person name="Li S."/>
            <person name="Dong L."/>
            <person name="Huang Y."/>
            <person name="Li L."/>
            <person name="Xi Y."/>
            <person name="Qi Q."/>
            <person name="Li W."/>
            <person name="Zhang B."/>
            <person name="Hu W."/>
            <person name="Zhang Y."/>
            <person name="Tian X."/>
            <person name="Jiao Y."/>
            <person name="Liang X."/>
            <person name="Jin J."/>
            <person name="Gao L."/>
            <person name="Zheng W."/>
            <person name="Hao B."/>
            <person name="Liu S.-M."/>
            <person name="Wang W."/>
            <person name="Yuan L."/>
            <person name="Cao M."/>
            <person name="McDermott J."/>
            <person name="Samudrala R."/>
            <person name="Wang J."/>
            <person name="Wong G.K.-S."/>
            <person name="Yang H."/>
        </authorList>
    </citation>
    <scope>NUCLEOTIDE SEQUENCE [LARGE SCALE GENOMIC DNA]</scope>
    <source>
        <strain>cv. 93-11</strain>
    </source>
</reference>
<reference key="2">
    <citation type="journal article" date="2014" name="Plant Physiol.">
        <title>Functional and evolutionary analysis of the CASPARIAN STRIP MEMBRANE DOMAIN PROTEIN family.</title>
        <authorList>
            <person name="Roppolo D."/>
            <person name="Boeckmann B."/>
            <person name="Pfister A."/>
            <person name="Boutet E."/>
            <person name="Rubio M.C."/>
            <person name="Denervaud-Tendon V."/>
            <person name="Vermeer J.E."/>
            <person name="Gheyselinck J."/>
            <person name="Xenarios I."/>
            <person name="Geldner N."/>
        </authorList>
    </citation>
    <scope>GENE FAMILY</scope>
    <scope>NOMENCLATURE</scope>
</reference>
<gene>
    <name type="ORF">OsI_30044</name>
</gene>
<comment type="subunit">
    <text evidence="1">Homodimer and heterodimers.</text>
</comment>
<comment type="subcellular location">
    <subcellularLocation>
        <location evidence="1">Cell membrane</location>
        <topology evidence="1">Multi-pass membrane protein</topology>
    </subcellularLocation>
</comment>
<comment type="similarity">
    <text evidence="3">Belongs to the Casparian strip membrane proteins (CASP) family.</text>
</comment>
<keyword id="KW-1003">Cell membrane</keyword>
<keyword id="KW-0472">Membrane</keyword>
<keyword id="KW-1185">Reference proteome</keyword>
<keyword id="KW-0812">Transmembrane</keyword>
<keyword id="KW-1133">Transmembrane helix</keyword>
<evidence type="ECO:0000250" key="1"/>
<evidence type="ECO:0000255" key="2"/>
<evidence type="ECO:0000305" key="3"/>
<feature type="chain" id="PRO_0000412019" description="CASP-like protein UU1">
    <location>
        <begin position="1"/>
        <end position="167"/>
    </location>
</feature>
<feature type="topological domain" description="Cytoplasmic" evidence="2">
    <location>
        <begin position="1"/>
        <end position="17"/>
    </location>
</feature>
<feature type="transmembrane region" description="Helical" evidence="2">
    <location>
        <begin position="18"/>
        <end position="38"/>
    </location>
</feature>
<feature type="topological domain" description="Extracellular" evidence="2">
    <location>
        <begin position="39"/>
        <end position="54"/>
    </location>
</feature>
<feature type="transmembrane region" description="Helical" evidence="2">
    <location>
        <begin position="55"/>
        <end position="75"/>
    </location>
</feature>
<feature type="topological domain" description="Cytoplasmic" evidence="2">
    <location>
        <begin position="76"/>
        <end position="94"/>
    </location>
</feature>
<feature type="transmembrane region" description="Helical" evidence="2">
    <location>
        <begin position="95"/>
        <end position="115"/>
    </location>
</feature>
<feature type="topological domain" description="Extracellular" evidence="2">
    <location>
        <begin position="116"/>
        <end position="135"/>
    </location>
</feature>
<feature type="transmembrane region" description="Helical" evidence="2">
    <location>
        <begin position="136"/>
        <end position="156"/>
    </location>
</feature>
<feature type="topological domain" description="Cytoplasmic" evidence="2">
    <location>
        <begin position="157"/>
        <end position="167"/>
    </location>
</feature>
<accession>A2YXI1</accession>
<proteinExistence type="inferred from homology"/>
<sequence length="167" mass="17492">MVELESQEAVTVASTADIAVDVSLRLLAAATSLASAVVVAANHQQRWGVRVDFTLFQVWIGFVAVNLVCTVYAAATAAAARKAMGRWWLHHADAVVVNLEAAATAGAGAIGSIAMWGNEASGWYAVCRLYRRYCNAGAAALALSLAAVLLLGVACARSRYPKMPPTT</sequence>
<dbReference type="EMBL" id="CM000133">
    <property type="protein sequence ID" value="EAZ07792.1"/>
    <property type="molecule type" value="Genomic_DNA"/>
</dbReference>
<dbReference type="SMR" id="A2YXI1"/>
<dbReference type="STRING" id="39946.A2YXI1"/>
<dbReference type="EnsemblPlants" id="BGIOSGA029066-TA">
    <property type="protein sequence ID" value="BGIOSGA029066-PA"/>
    <property type="gene ID" value="BGIOSGA029066"/>
</dbReference>
<dbReference type="EnsemblPlants" id="OsGoSa_08g0022700.01">
    <property type="protein sequence ID" value="OsGoSa_08g0022700.01"/>
    <property type="gene ID" value="OsGoSa_08g0022700"/>
</dbReference>
<dbReference type="EnsemblPlants" id="OsIR64_08g0023190.01">
    <property type="protein sequence ID" value="OsIR64_08g0023190.01"/>
    <property type="gene ID" value="OsIR64_08g0023190"/>
</dbReference>
<dbReference type="EnsemblPlants" id="OsKYG_08g0022880.01">
    <property type="protein sequence ID" value="OsKYG_08g0022880.01"/>
    <property type="gene ID" value="OsKYG_08g0022880"/>
</dbReference>
<dbReference type="EnsemblPlants" id="OsLaMu_08g0022860.01">
    <property type="protein sequence ID" value="OsLaMu_08g0022860.01"/>
    <property type="gene ID" value="OsLaMu_08g0022860"/>
</dbReference>
<dbReference type="Gramene" id="BGIOSGA029066-TA">
    <property type="protein sequence ID" value="BGIOSGA029066-PA"/>
    <property type="gene ID" value="BGIOSGA029066"/>
</dbReference>
<dbReference type="Gramene" id="OsGoSa_08g0022700.01">
    <property type="protein sequence ID" value="OsGoSa_08g0022700.01"/>
    <property type="gene ID" value="OsGoSa_08g0022700"/>
</dbReference>
<dbReference type="Gramene" id="OsIR64_08g0023190.01">
    <property type="protein sequence ID" value="OsIR64_08g0023190.01"/>
    <property type="gene ID" value="OsIR64_08g0023190"/>
</dbReference>
<dbReference type="Gramene" id="OsKYG_08g0022880.01">
    <property type="protein sequence ID" value="OsKYG_08g0022880.01"/>
    <property type="gene ID" value="OsKYG_08g0022880"/>
</dbReference>
<dbReference type="Gramene" id="OsLaMu_08g0022860.01">
    <property type="protein sequence ID" value="OsLaMu_08g0022860.01"/>
    <property type="gene ID" value="OsLaMu_08g0022860"/>
</dbReference>
<dbReference type="HOGENOM" id="CLU_1491594_0_0_1"/>
<dbReference type="OMA" id="GWFAVCR"/>
<dbReference type="OrthoDB" id="677395at2759"/>
<dbReference type="Proteomes" id="UP000007015">
    <property type="component" value="Chromosome 8"/>
</dbReference>
<dbReference type="GO" id="GO:0005886">
    <property type="term" value="C:plasma membrane"/>
    <property type="evidence" value="ECO:0007669"/>
    <property type="project" value="UniProtKB-SubCell"/>
</dbReference>
<dbReference type="InterPro" id="IPR006459">
    <property type="entry name" value="CASP/CASPL"/>
</dbReference>
<dbReference type="InterPro" id="IPR006702">
    <property type="entry name" value="CASP_dom"/>
</dbReference>
<dbReference type="InterPro" id="IPR044173">
    <property type="entry name" value="CASPL"/>
</dbReference>
<dbReference type="NCBIfam" id="TIGR01569">
    <property type="entry name" value="A_tha_TIGR01569"/>
    <property type="match status" value="1"/>
</dbReference>
<dbReference type="PANTHER" id="PTHR36488">
    <property type="entry name" value="CASP-LIKE PROTEIN 1U1"/>
    <property type="match status" value="1"/>
</dbReference>
<dbReference type="PANTHER" id="PTHR36488:SF8">
    <property type="entry name" value="CASP-LIKE PROTEIN 1U1"/>
    <property type="match status" value="1"/>
</dbReference>
<dbReference type="Pfam" id="PF04535">
    <property type="entry name" value="CASP_dom"/>
    <property type="match status" value="1"/>
</dbReference>
<organism>
    <name type="scientific">Oryza sativa subsp. indica</name>
    <name type="common">Rice</name>
    <dbReference type="NCBI Taxonomy" id="39946"/>
    <lineage>
        <taxon>Eukaryota</taxon>
        <taxon>Viridiplantae</taxon>
        <taxon>Streptophyta</taxon>
        <taxon>Embryophyta</taxon>
        <taxon>Tracheophyta</taxon>
        <taxon>Spermatophyta</taxon>
        <taxon>Magnoliopsida</taxon>
        <taxon>Liliopsida</taxon>
        <taxon>Poales</taxon>
        <taxon>Poaceae</taxon>
        <taxon>BOP clade</taxon>
        <taxon>Oryzoideae</taxon>
        <taxon>Oryzeae</taxon>
        <taxon>Oryzinae</taxon>
        <taxon>Oryza</taxon>
        <taxon>Oryza sativa</taxon>
    </lineage>
</organism>
<name>CSPL3_ORYSI</name>